<name>MACOI_HUMAN</name>
<proteinExistence type="evidence at protein level"/>
<dbReference type="EMBL" id="AY845015">
    <property type="protein sequence ID" value="AAX11913.1"/>
    <property type="molecule type" value="mRNA"/>
</dbReference>
<dbReference type="EMBL" id="AY845036">
    <property type="protein sequence ID" value="AAX11934.1"/>
    <property type="molecule type" value="mRNA"/>
</dbReference>
<dbReference type="EMBL" id="AY845035">
    <property type="protein sequence ID" value="AAX11933.1"/>
    <property type="molecule type" value="mRNA"/>
</dbReference>
<dbReference type="EMBL" id="AK001609">
    <property type="protein sequence ID" value="BAA91786.1"/>
    <property type="molecule type" value="mRNA"/>
</dbReference>
<dbReference type="EMBL" id="AL031284">
    <property type="status" value="NOT_ANNOTATED_CDS"/>
    <property type="molecule type" value="Genomic_DNA"/>
</dbReference>
<dbReference type="EMBL" id="BX572623">
    <property type="status" value="NOT_ANNOTATED_CDS"/>
    <property type="molecule type" value="Genomic_DNA"/>
</dbReference>
<dbReference type="EMBL" id="CH471059">
    <property type="protein sequence ID" value="EAX07876.1"/>
    <property type="molecule type" value="Genomic_DNA"/>
</dbReference>
<dbReference type="EMBL" id="BC032427">
    <property type="protein sequence ID" value="AAH32427.1"/>
    <property type="molecule type" value="mRNA"/>
</dbReference>
<dbReference type="CCDS" id="CCDS30638.1">
    <molecule id="Q8N5G2-1"/>
</dbReference>
<dbReference type="CCDS" id="CCDS60034.1">
    <molecule id="Q8N5G2-3"/>
</dbReference>
<dbReference type="RefSeq" id="NP_001269493.1">
    <molecule id="Q8N5G2-3"/>
    <property type="nucleotide sequence ID" value="NM_001282564.2"/>
</dbReference>
<dbReference type="RefSeq" id="NP_060672.2">
    <molecule id="Q8N5G2-1"/>
    <property type="nucleotide sequence ID" value="NM_018202.5"/>
</dbReference>
<dbReference type="SMR" id="Q8N5G2"/>
<dbReference type="BioGRID" id="120515">
    <property type="interactions" value="204"/>
</dbReference>
<dbReference type="FunCoup" id="Q8N5G2">
    <property type="interactions" value="2904"/>
</dbReference>
<dbReference type="IntAct" id="Q8N5G2">
    <property type="interactions" value="85"/>
</dbReference>
<dbReference type="MINT" id="Q8N5G2"/>
<dbReference type="STRING" id="9606.ENSP00000363463"/>
<dbReference type="TCDB" id="8.A.38.1.1">
    <property type="family name" value="the animal macoilin regulator of ion channels (macoilin) family"/>
</dbReference>
<dbReference type="GlyCosmos" id="Q8N5G2">
    <property type="glycosylation" value="4 sites, No reported glycans"/>
</dbReference>
<dbReference type="GlyGen" id="Q8N5G2">
    <property type="glycosylation" value="7 sites, 1 N-linked glycan (2 sites), 1 O-linked glycan (3 sites)"/>
</dbReference>
<dbReference type="iPTMnet" id="Q8N5G2"/>
<dbReference type="PhosphoSitePlus" id="Q8N5G2"/>
<dbReference type="SwissPalm" id="Q8N5G2"/>
<dbReference type="BioMuta" id="TMEM57"/>
<dbReference type="DMDM" id="74728992"/>
<dbReference type="jPOST" id="Q8N5G2"/>
<dbReference type="MassIVE" id="Q8N5G2"/>
<dbReference type="PaxDb" id="9606-ENSP00000363463"/>
<dbReference type="PeptideAtlas" id="Q8N5G2"/>
<dbReference type="ProteomicsDB" id="72049">
    <molecule id="Q8N5G2-1"/>
</dbReference>
<dbReference type="ProteomicsDB" id="72050">
    <molecule id="Q8N5G2-2"/>
</dbReference>
<dbReference type="ProteomicsDB" id="72051">
    <molecule id="Q8N5G2-3"/>
</dbReference>
<dbReference type="Pumba" id="Q8N5G2"/>
<dbReference type="Antibodypedia" id="15928">
    <property type="antibodies" value="78 antibodies from 17 providers"/>
</dbReference>
<dbReference type="DNASU" id="55219"/>
<dbReference type="Ensembl" id="ENST00000374343.5">
    <molecule id="Q8N5G2-1"/>
    <property type="protein sequence ID" value="ENSP00000363463.4"/>
    <property type="gene ID" value="ENSG00000204178.11"/>
</dbReference>
<dbReference type="Ensembl" id="ENST00000399766.7">
    <molecule id="Q8N5G2-3"/>
    <property type="protein sequence ID" value="ENSP00000382668.3"/>
    <property type="gene ID" value="ENSG00000204178.11"/>
</dbReference>
<dbReference type="GeneID" id="55219"/>
<dbReference type="KEGG" id="hsa:55219"/>
<dbReference type="MANE-Select" id="ENST00000374343.5">
    <property type="protein sequence ID" value="ENSP00000363463.4"/>
    <property type="RefSeq nucleotide sequence ID" value="NM_018202.6"/>
    <property type="RefSeq protein sequence ID" value="NP_060672.2"/>
</dbReference>
<dbReference type="UCSC" id="uc001bkk.5">
    <molecule id="Q8N5G2-1"/>
    <property type="organism name" value="human"/>
</dbReference>
<dbReference type="AGR" id="HGNC:25572"/>
<dbReference type="CTD" id="55219"/>
<dbReference type="DisGeNET" id="55219"/>
<dbReference type="GeneCards" id="MACO1"/>
<dbReference type="HGNC" id="HGNC:25572">
    <property type="gene designation" value="MACO1"/>
</dbReference>
<dbReference type="HPA" id="ENSG00000204178">
    <property type="expression patterns" value="Low tissue specificity"/>
</dbReference>
<dbReference type="MIM" id="610301">
    <property type="type" value="gene"/>
</dbReference>
<dbReference type="neXtProt" id="NX_Q8N5G2"/>
<dbReference type="OpenTargets" id="ENSG00000204178"/>
<dbReference type="PharmGKB" id="PA142670773"/>
<dbReference type="VEuPathDB" id="HostDB:ENSG00000204178"/>
<dbReference type="eggNOG" id="KOG1821">
    <property type="taxonomic scope" value="Eukaryota"/>
</dbReference>
<dbReference type="GeneTree" id="ENSGT00390000016613"/>
<dbReference type="HOGENOM" id="CLU_051352_0_0_1"/>
<dbReference type="InParanoid" id="Q8N5G2"/>
<dbReference type="OMA" id="ENTHADT"/>
<dbReference type="OrthoDB" id="10071111at2759"/>
<dbReference type="PAN-GO" id="Q8N5G2">
    <property type="GO annotations" value="5 GO annotations based on evolutionary models"/>
</dbReference>
<dbReference type="PhylomeDB" id="Q8N5G2"/>
<dbReference type="TreeFam" id="TF324023"/>
<dbReference type="PathwayCommons" id="Q8N5G2"/>
<dbReference type="Reactome" id="R-HSA-8980692">
    <property type="pathway name" value="RHOA GTPase cycle"/>
</dbReference>
<dbReference type="Reactome" id="R-HSA-9013106">
    <property type="pathway name" value="RHOC GTPase cycle"/>
</dbReference>
<dbReference type="SignaLink" id="Q8N5G2"/>
<dbReference type="BioGRID-ORCS" id="55219">
    <property type="hits" value="14 hits in 1155 CRISPR screens"/>
</dbReference>
<dbReference type="ChiTaRS" id="MACO1">
    <property type="organism name" value="human"/>
</dbReference>
<dbReference type="GenomeRNAi" id="55219"/>
<dbReference type="Pharos" id="Q8N5G2">
    <property type="development level" value="Tbio"/>
</dbReference>
<dbReference type="PRO" id="PR:Q8N5G2"/>
<dbReference type="Proteomes" id="UP000005640">
    <property type="component" value="Chromosome 1"/>
</dbReference>
<dbReference type="RNAct" id="Q8N5G2">
    <property type="molecule type" value="protein"/>
</dbReference>
<dbReference type="Bgee" id="ENSG00000204178">
    <property type="expression patterns" value="Expressed in cortical plate and 188 other cell types or tissues"/>
</dbReference>
<dbReference type="ExpressionAtlas" id="Q8N5G2">
    <property type="expression patterns" value="baseline and differential"/>
</dbReference>
<dbReference type="GO" id="GO:0030424">
    <property type="term" value="C:axon"/>
    <property type="evidence" value="ECO:0007669"/>
    <property type="project" value="UniProtKB-SubCell"/>
</dbReference>
<dbReference type="GO" id="GO:0044306">
    <property type="term" value="C:neuron projection terminus"/>
    <property type="evidence" value="ECO:0000250"/>
    <property type="project" value="BHF-UCL"/>
</dbReference>
<dbReference type="GO" id="GO:0031965">
    <property type="term" value="C:nuclear membrane"/>
    <property type="evidence" value="ECO:0000250"/>
    <property type="project" value="BHF-UCL"/>
</dbReference>
<dbReference type="GO" id="GO:0005634">
    <property type="term" value="C:nucleus"/>
    <property type="evidence" value="ECO:0000250"/>
    <property type="project" value="BHF-UCL"/>
</dbReference>
<dbReference type="GO" id="GO:0030867">
    <property type="term" value="C:rough endoplasmic reticulum membrane"/>
    <property type="evidence" value="ECO:0000314"/>
    <property type="project" value="UniProtKB"/>
</dbReference>
<dbReference type="GO" id="GO:0045202">
    <property type="term" value="C:synapse"/>
    <property type="evidence" value="ECO:0000250"/>
    <property type="project" value="BHF-UCL"/>
</dbReference>
<dbReference type="GO" id="GO:0008017">
    <property type="term" value="F:microtubule binding"/>
    <property type="evidence" value="ECO:0000318"/>
    <property type="project" value="GO_Central"/>
</dbReference>
<dbReference type="GO" id="GO:0007420">
    <property type="term" value="P:brain development"/>
    <property type="evidence" value="ECO:0007669"/>
    <property type="project" value="Ensembl"/>
</dbReference>
<dbReference type="GO" id="GO:0006935">
    <property type="term" value="P:chemotaxis"/>
    <property type="evidence" value="ECO:0000318"/>
    <property type="project" value="GO_Central"/>
</dbReference>
<dbReference type="GO" id="GO:0023041">
    <property type="term" value="P:neuronal signal transduction"/>
    <property type="evidence" value="ECO:0000315"/>
    <property type="project" value="UniProtKB"/>
</dbReference>
<dbReference type="InterPro" id="IPR019130">
    <property type="entry name" value="Macoilin"/>
</dbReference>
<dbReference type="PANTHER" id="PTHR47464">
    <property type="entry name" value="MACOILIN"/>
    <property type="match status" value="1"/>
</dbReference>
<dbReference type="PANTHER" id="PTHR47464:SF2">
    <property type="entry name" value="MACOILIN"/>
    <property type="match status" value="1"/>
</dbReference>
<dbReference type="Pfam" id="PF09726">
    <property type="entry name" value="Macoilin"/>
    <property type="match status" value="1"/>
</dbReference>
<organism>
    <name type="scientific">Homo sapiens</name>
    <name type="common">Human</name>
    <dbReference type="NCBI Taxonomy" id="9606"/>
    <lineage>
        <taxon>Eukaryota</taxon>
        <taxon>Metazoa</taxon>
        <taxon>Chordata</taxon>
        <taxon>Craniata</taxon>
        <taxon>Vertebrata</taxon>
        <taxon>Euteleostomi</taxon>
        <taxon>Mammalia</taxon>
        <taxon>Eutheria</taxon>
        <taxon>Euarchontoglires</taxon>
        <taxon>Primates</taxon>
        <taxon>Haplorrhini</taxon>
        <taxon>Catarrhini</taxon>
        <taxon>Hominidae</taxon>
        <taxon>Homo</taxon>
    </lineage>
</organism>
<feature type="chain" id="PRO_0000070266" description="Macoilin">
    <location>
        <begin position="1"/>
        <end position="664"/>
    </location>
</feature>
<feature type="transmembrane region" description="Helical" evidence="2">
    <location>
        <begin position="28"/>
        <end position="48"/>
    </location>
</feature>
<feature type="transmembrane region" description="Helical" evidence="2">
    <location>
        <begin position="75"/>
        <end position="95"/>
    </location>
</feature>
<feature type="transmembrane region" description="Helical" evidence="2">
    <location>
        <begin position="120"/>
        <end position="140"/>
    </location>
</feature>
<feature type="transmembrane region" description="Helical" evidence="2">
    <location>
        <begin position="154"/>
        <end position="174"/>
    </location>
</feature>
<feature type="region of interest" description="Disordered" evidence="3">
    <location>
        <begin position="253"/>
        <end position="274"/>
    </location>
</feature>
<feature type="region of interest" description="Disordered" evidence="3">
    <location>
        <begin position="320"/>
        <end position="375"/>
    </location>
</feature>
<feature type="region of interest" description="Disordered" evidence="3">
    <location>
        <begin position="630"/>
        <end position="664"/>
    </location>
</feature>
<feature type="compositionally biased region" description="Basic and acidic residues" evidence="3">
    <location>
        <begin position="253"/>
        <end position="265"/>
    </location>
</feature>
<feature type="compositionally biased region" description="Polar residues" evidence="3">
    <location>
        <begin position="320"/>
        <end position="348"/>
    </location>
</feature>
<feature type="modified residue" description="Phosphoserine" evidence="12">
    <location>
        <position position="305"/>
    </location>
</feature>
<feature type="modified residue" description="Phosphoserine" evidence="9 10 11">
    <location>
        <position position="332"/>
    </location>
</feature>
<feature type="modified residue" description="Phosphoserine" evidence="9">
    <location>
        <position position="631"/>
    </location>
</feature>
<feature type="modified residue" description="Phosphoserine" evidence="10">
    <location>
        <position position="634"/>
    </location>
</feature>
<feature type="glycosylation site" description="N-linked (GlcNAc...) asparagine" evidence="2">
    <location>
        <position position="324"/>
    </location>
</feature>
<feature type="glycosylation site" description="N-linked (GlcNAc...) asparagine" evidence="2">
    <location>
        <position position="340"/>
    </location>
</feature>
<feature type="glycosylation site" description="N-linked (GlcNAc...) asparagine" evidence="2">
    <location>
        <position position="452"/>
    </location>
</feature>
<feature type="glycosylation site" description="N-linked (GlcNAc...) asparagine" evidence="2">
    <location>
        <position position="655"/>
    </location>
</feature>
<feature type="splice variant" id="VSP_017203" description="In isoform 2." evidence="6">
    <location>
        <begin position="27"/>
        <end position="384"/>
    </location>
</feature>
<feature type="splice variant" id="VSP_017204" description="In isoform 3." evidence="6">
    <original>C</original>
    <variation>W</variation>
    <location>
        <position position="158"/>
    </location>
</feature>
<feature type="splice variant" id="VSP_017205" description="In isoform 3." evidence="6">
    <location>
        <begin position="159"/>
        <end position="385"/>
    </location>
</feature>
<feature type="sequence conflict" description="In Ref. 2; BAA91786." evidence="7" ref="2">
    <original>R</original>
    <variation>I</variation>
    <location>
        <position position="577"/>
    </location>
</feature>
<evidence type="ECO:0000250" key="1">
    <source>
        <dbReference type="UniProtKB" id="Q7TQE6"/>
    </source>
</evidence>
<evidence type="ECO:0000255" key="2"/>
<evidence type="ECO:0000256" key="3">
    <source>
        <dbReference type="SAM" id="MobiDB-lite"/>
    </source>
</evidence>
<evidence type="ECO:0000269" key="4">
    <source>
    </source>
</evidence>
<evidence type="ECO:0000303" key="5">
    <source>
    </source>
</evidence>
<evidence type="ECO:0000303" key="6">
    <source ref="1"/>
</evidence>
<evidence type="ECO:0000305" key="7"/>
<evidence type="ECO:0000312" key="8">
    <source>
        <dbReference type="HGNC" id="HGNC:25572"/>
    </source>
</evidence>
<evidence type="ECO:0007744" key="9">
    <source>
    </source>
</evidence>
<evidence type="ECO:0007744" key="10">
    <source>
    </source>
</evidence>
<evidence type="ECO:0007744" key="11">
    <source>
    </source>
</evidence>
<evidence type="ECO:0007744" key="12">
    <source>
    </source>
</evidence>
<protein>
    <recommendedName>
        <fullName evidence="5">Macoilin</fullName>
    </recommendedName>
    <alternativeName>
        <fullName evidence="8">Macoilin-1</fullName>
    </alternativeName>
    <alternativeName>
        <fullName>Transmembrane protein 57</fullName>
    </alternativeName>
</protein>
<accession>Q8N5G2</accession>
<accession>B1AK00</accession>
<accession>Q2TLX5</accession>
<accession>Q2TLX6</accession>
<accession>Q9NVG6</accession>
<gene>
    <name evidence="8" type="primary">MACO1</name>
    <name evidence="8" type="synonym">TMEM57</name>
</gene>
<comment type="function">
    <text evidence="4">Plays a role in the regulation of neuronal activity.</text>
</comment>
<comment type="interaction">
    <interactant intactId="EBI-2683507">
        <id>Q8N5G2</id>
    </interactant>
    <interactant intactId="EBI-3904822">
        <id>P48745</id>
        <label>CCN3</label>
    </interactant>
    <organismsDiffer>false</organismsDiffer>
    <experiments>3</experiments>
</comment>
<comment type="interaction">
    <interactant intactId="EBI-2683507">
        <id>Q8N5G2</id>
    </interactant>
    <interactant intactId="EBI-713677">
        <id>Q9UGL9</id>
        <label>CRCT1</label>
    </interactant>
    <organismsDiffer>false</organismsDiffer>
    <experiments>5</experiments>
</comment>
<comment type="interaction">
    <interactant intactId="EBI-2683507">
        <id>Q8N5G2</id>
    </interactant>
    <interactant intactId="EBI-740785">
        <id>P49639</id>
        <label>HOXA1</label>
    </interactant>
    <organismsDiffer>false</organismsDiffer>
    <experiments>3</experiments>
</comment>
<comment type="interaction">
    <interactant intactId="EBI-2683507">
        <id>Q8N5G2</id>
    </interactant>
    <interactant intactId="EBI-11958178">
        <id>Q701N4</id>
        <label>KRTAP5-2</label>
    </interactant>
    <organismsDiffer>false</organismsDiffer>
    <experiments>3</experiments>
</comment>
<comment type="interaction">
    <interactant intactId="EBI-2683507">
        <id>Q8N5G2</id>
    </interactant>
    <interactant intactId="EBI-11987425">
        <id>Q6L8G8</id>
        <label>KRTAP5-7</label>
    </interactant>
    <organismsDiffer>false</organismsDiffer>
    <experiments>3</experiments>
</comment>
<comment type="interaction">
    <interactant intactId="EBI-2683507">
        <id>Q8N5G2</id>
    </interactant>
    <interactant intactId="EBI-12224199">
        <id>Q5T751</id>
        <label>LCE1C</label>
    </interactant>
    <organismsDiffer>false</organismsDiffer>
    <experiments>3</experiments>
</comment>
<comment type="interaction">
    <interactant intactId="EBI-2683507">
        <id>Q8N5G2</id>
    </interactant>
    <interactant intactId="EBI-11741311">
        <id>Q5T752</id>
        <label>LCE1D</label>
    </interactant>
    <organismsDiffer>false</organismsDiffer>
    <experiments>3</experiments>
</comment>
<comment type="interaction">
    <interactant intactId="EBI-2683507">
        <id>Q8N5G2</id>
    </interactant>
    <interactant intactId="EBI-11955335">
        <id>Q5T753</id>
        <label>LCE1E</label>
    </interactant>
    <organismsDiffer>false</organismsDiffer>
    <experiments>3</experiments>
</comment>
<comment type="interaction">
    <interactant intactId="EBI-2683507">
        <id>Q8N5G2</id>
    </interactant>
    <interactant intactId="EBI-11958008">
        <id>Q5T754</id>
        <label>LCE1F</label>
    </interactant>
    <organismsDiffer>false</organismsDiffer>
    <experiments>3</experiments>
</comment>
<comment type="interaction">
    <interactant intactId="EBI-2683507">
        <id>Q8N5G2</id>
    </interactant>
    <interactant intactId="EBI-11973993">
        <id>Q5TA81</id>
        <label>LCE2C</label>
    </interactant>
    <organismsDiffer>false</organismsDiffer>
    <experiments>3</experiments>
</comment>
<comment type="interaction">
    <interactant intactId="EBI-2683507">
        <id>Q8N5G2</id>
    </interactant>
    <interactant intactId="EBI-9394625">
        <id>Q5TA76</id>
        <label>LCE3A</label>
    </interactant>
    <organismsDiffer>false</organismsDiffer>
    <experiments>3</experiments>
</comment>
<comment type="interaction">
    <interactant intactId="EBI-2683507">
        <id>Q8N5G2</id>
    </interactant>
    <interactant intactId="EBI-10245456">
        <id>Q5T5B0</id>
        <label>LCE3E</label>
    </interactant>
    <organismsDiffer>false</organismsDiffer>
    <experiments>3</experiments>
</comment>
<comment type="interaction">
    <interactant intactId="EBI-2683507">
        <id>Q8N5G2</id>
    </interactant>
    <interactant intactId="EBI-719955">
        <id>Q96FE5</id>
        <label>LINGO1</label>
    </interactant>
    <organismsDiffer>false</organismsDiffer>
    <experiments>3</experiments>
</comment>
<comment type="interaction">
    <interactant intactId="EBI-2683507">
        <id>Q8N5G2</id>
    </interactant>
    <interactant intactId="EBI-19944212">
        <id>A8MW99</id>
        <label>MEI4</label>
    </interactant>
    <organismsDiffer>false</organismsDiffer>
    <experiments>3</experiments>
</comment>
<comment type="interaction">
    <interactant intactId="EBI-2683507">
        <id>Q8N5G2</id>
    </interactant>
    <interactant intactId="EBI-16439278">
        <id>Q6FHY5</id>
        <label>MEOX2</label>
    </interactant>
    <organismsDiffer>false</organismsDiffer>
    <experiments>3</experiments>
</comment>
<comment type="interaction">
    <interactant intactId="EBI-2683507">
        <id>Q8N5G2</id>
    </interactant>
    <interactant intactId="EBI-22310682">
        <id>P0DPK4</id>
        <label>NOTCH2NLC</label>
    </interactant>
    <organismsDiffer>false</organismsDiffer>
    <experiments>3</experiments>
</comment>
<comment type="interaction">
    <interactant intactId="EBI-2683507">
        <id>Q8N5G2</id>
    </interactant>
    <interactant intactId="EBI-13644623">
        <id>Q92570</id>
        <label>NR4A3</label>
    </interactant>
    <organismsDiffer>false</organismsDiffer>
    <experiments>3</experiments>
</comment>
<comment type="interaction">
    <interactant intactId="EBI-2683507">
        <id>Q8N5G2</id>
    </interactant>
    <interactant intactId="EBI-18165900">
        <id>A0JP26</id>
        <label>POTEB3</label>
    </interactant>
    <organismsDiffer>false</organismsDiffer>
    <experiments>3</experiments>
</comment>
<comment type="interaction">
    <interactant intactId="EBI-2683507">
        <id>Q8N5G2</id>
    </interactant>
    <interactant intactId="EBI-750494">
        <id>P49901</id>
        <label>SMCP</label>
    </interactant>
    <organismsDiffer>false</organismsDiffer>
    <experiments>3</experiments>
</comment>
<comment type="interaction">
    <interactant intactId="EBI-2683507">
        <id>Q8N5G2</id>
    </interactant>
    <interactant intactId="EBI-10278423">
        <id>Q8WZ59</id>
        <label>TMEM190</label>
    </interactant>
    <organismsDiffer>false</organismsDiffer>
    <experiments>3</experiments>
</comment>
<comment type="interaction">
    <interactant intactId="EBI-2683507">
        <id>Q8N5G2</id>
    </interactant>
    <interactant intactId="EBI-625509">
        <id>Q8N720</id>
        <label>ZNF655</label>
    </interactant>
    <organismsDiffer>false</organismsDiffer>
    <experiments>3</experiments>
</comment>
<comment type="subcellular location">
    <subcellularLocation>
        <location evidence="1">Nucleus membrane</location>
        <topology evidence="2">Multi-pass membrane protein</topology>
    </subcellularLocation>
    <subcellularLocation>
        <location evidence="1">Cell projection</location>
        <location evidence="1">Axon</location>
    </subcellularLocation>
    <subcellularLocation>
        <location evidence="4">Rough endoplasmic reticulum membrane</location>
        <topology evidence="2">Multi-pass membrane protein</topology>
    </subcellularLocation>
    <text evidence="1">Detected in the nucleus membrane of non-neuronal cells and in axonal outgrowths of neuronal cells.</text>
</comment>
<comment type="alternative products">
    <event type="alternative splicing"/>
    <isoform>
        <id>Q8N5G2-1</id>
        <name>1</name>
        <sequence type="displayed"/>
    </isoform>
    <isoform>
        <id>Q8N5G2-2</id>
        <name>2</name>
        <sequence type="described" ref="VSP_017203"/>
    </isoform>
    <isoform>
        <id>Q8N5G2-3</id>
        <name>3</name>
        <sequence type="described" ref="VSP_017204 VSP_017205"/>
    </isoform>
</comment>
<comment type="similarity">
    <text evidence="7">Belongs to the macoilin family.</text>
</comment>
<keyword id="KW-0025">Alternative splicing</keyword>
<keyword id="KW-0966">Cell projection</keyword>
<keyword id="KW-0256">Endoplasmic reticulum</keyword>
<keyword id="KW-0325">Glycoprotein</keyword>
<keyword id="KW-0472">Membrane</keyword>
<keyword id="KW-0539">Nucleus</keyword>
<keyword id="KW-0597">Phosphoprotein</keyword>
<keyword id="KW-1267">Proteomics identification</keyword>
<keyword id="KW-1185">Reference proteome</keyword>
<keyword id="KW-0812">Transmembrane</keyword>
<keyword id="KW-1133">Transmembrane helix</keyword>
<sequence length="664" mass="76178">MKRRNADCSKLRRPLKRNRITEGIYGSTFLYLKFLVVWALVLLADFVLEFRFEYLWPFWLFIRSVYDSFRYQGLAFSVFFVCVAFTSNIICLLFIPIQWLFFAASTYVWVQYVWHTERGVCLPTVSLWILFVYIEAAIRFKDLKNFHVDLCRPFAAHCIGYPVVTLGFGFKSYVSYKMRLRKQKEVQKENEFYMQLLQQALPPEQQMLQKQEKEAEEAAKGLPDMDSSILIHHNGGIPANKKLSTTLPEIEYREKGKEKDKDAKKHNLGINNNNILQPVDSKIQEIEYMENHINSKRLNNDLVGSTENLLKEDSCTASSKNYKNASGVVNSSPRSHSATNGSIPSSSSKNEKKQKCTSKSPSTHKDLMENCIPNNQLSKPDALVRLEQDIKKLKADLQASRQVEQELRSQISSLSSTERGIRSEMGQLRQENELLQNKLHNAVQMKQKDKQNISQLEKKLKAEQEARSFVEKQLMEEKKRKKLEEATAARAVAFAAASRGECTETLRNRIRELEAEGKKLTMDMKVKEDQIRELELKVQELRKYKENEKDTEVLMSALSAMQDKTQHLENSLSAETRIKLDLFSALGDAKRQLEIAQGQILQKDQEIKDLKQKIAEVMAVMPSITYSAATSPLSPVSPHYSSKFVETSPSGLDPNASVYQPLKK</sequence>
<reference key="1">
    <citation type="submission" date="2004-12" db="EMBL/GenBank/DDBJ databases">
        <title>Identification of macoilin as a novel membrane-associated coiled-coil tetraspanin protein.</title>
        <authorList>
            <person name="Huang C.-H."/>
            <person name="Peng J."/>
            <person name="Ye T."/>
            <person name="Chen Y."/>
        </authorList>
    </citation>
    <scope>NUCLEOTIDE SEQUENCE [MRNA] (ISOFORMS 1; 2 AND 3)</scope>
</reference>
<reference key="2">
    <citation type="journal article" date="2004" name="Nat. Genet.">
        <title>Complete sequencing and characterization of 21,243 full-length human cDNAs.</title>
        <authorList>
            <person name="Ota T."/>
            <person name="Suzuki Y."/>
            <person name="Nishikawa T."/>
            <person name="Otsuki T."/>
            <person name="Sugiyama T."/>
            <person name="Irie R."/>
            <person name="Wakamatsu A."/>
            <person name="Hayashi K."/>
            <person name="Sato H."/>
            <person name="Nagai K."/>
            <person name="Kimura K."/>
            <person name="Makita H."/>
            <person name="Sekine M."/>
            <person name="Obayashi M."/>
            <person name="Nishi T."/>
            <person name="Shibahara T."/>
            <person name="Tanaka T."/>
            <person name="Ishii S."/>
            <person name="Yamamoto J."/>
            <person name="Saito K."/>
            <person name="Kawai Y."/>
            <person name="Isono Y."/>
            <person name="Nakamura Y."/>
            <person name="Nagahari K."/>
            <person name="Murakami K."/>
            <person name="Yasuda T."/>
            <person name="Iwayanagi T."/>
            <person name="Wagatsuma M."/>
            <person name="Shiratori A."/>
            <person name="Sudo H."/>
            <person name="Hosoiri T."/>
            <person name="Kaku Y."/>
            <person name="Kodaira H."/>
            <person name="Kondo H."/>
            <person name="Sugawara M."/>
            <person name="Takahashi M."/>
            <person name="Kanda K."/>
            <person name="Yokoi T."/>
            <person name="Furuya T."/>
            <person name="Kikkawa E."/>
            <person name="Omura Y."/>
            <person name="Abe K."/>
            <person name="Kamihara K."/>
            <person name="Katsuta N."/>
            <person name="Sato K."/>
            <person name="Tanikawa M."/>
            <person name="Yamazaki M."/>
            <person name="Ninomiya K."/>
            <person name="Ishibashi T."/>
            <person name="Yamashita H."/>
            <person name="Murakawa K."/>
            <person name="Fujimori K."/>
            <person name="Tanai H."/>
            <person name="Kimata M."/>
            <person name="Watanabe M."/>
            <person name="Hiraoka S."/>
            <person name="Chiba Y."/>
            <person name="Ishida S."/>
            <person name="Ono Y."/>
            <person name="Takiguchi S."/>
            <person name="Watanabe S."/>
            <person name="Yosida M."/>
            <person name="Hotuta T."/>
            <person name="Kusano J."/>
            <person name="Kanehori K."/>
            <person name="Takahashi-Fujii A."/>
            <person name="Hara H."/>
            <person name="Tanase T.-O."/>
            <person name="Nomura Y."/>
            <person name="Togiya S."/>
            <person name="Komai F."/>
            <person name="Hara R."/>
            <person name="Takeuchi K."/>
            <person name="Arita M."/>
            <person name="Imose N."/>
            <person name="Musashino K."/>
            <person name="Yuuki H."/>
            <person name="Oshima A."/>
            <person name="Sasaki N."/>
            <person name="Aotsuka S."/>
            <person name="Yoshikawa Y."/>
            <person name="Matsunawa H."/>
            <person name="Ichihara T."/>
            <person name="Shiohata N."/>
            <person name="Sano S."/>
            <person name="Moriya S."/>
            <person name="Momiyama H."/>
            <person name="Satoh N."/>
            <person name="Takami S."/>
            <person name="Terashima Y."/>
            <person name="Suzuki O."/>
            <person name="Nakagawa S."/>
            <person name="Senoh A."/>
            <person name="Mizoguchi H."/>
            <person name="Goto Y."/>
            <person name="Shimizu F."/>
            <person name="Wakebe H."/>
            <person name="Hishigaki H."/>
            <person name="Watanabe T."/>
            <person name="Sugiyama A."/>
            <person name="Takemoto M."/>
            <person name="Kawakami B."/>
            <person name="Yamazaki M."/>
            <person name="Watanabe K."/>
            <person name="Kumagai A."/>
            <person name="Itakura S."/>
            <person name="Fukuzumi Y."/>
            <person name="Fujimori Y."/>
            <person name="Komiyama M."/>
            <person name="Tashiro H."/>
            <person name="Tanigami A."/>
            <person name="Fujiwara T."/>
            <person name="Ono T."/>
            <person name="Yamada K."/>
            <person name="Fujii Y."/>
            <person name="Ozaki K."/>
            <person name="Hirao M."/>
            <person name="Ohmori Y."/>
            <person name="Kawabata A."/>
            <person name="Hikiji T."/>
            <person name="Kobatake N."/>
            <person name="Inagaki H."/>
            <person name="Ikema Y."/>
            <person name="Okamoto S."/>
            <person name="Okitani R."/>
            <person name="Kawakami T."/>
            <person name="Noguchi S."/>
            <person name="Itoh T."/>
            <person name="Shigeta K."/>
            <person name="Senba T."/>
            <person name="Matsumura K."/>
            <person name="Nakajima Y."/>
            <person name="Mizuno T."/>
            <person name="Morinaga M."/>
            <person name="Sasaki M."/>
            <person name="Togashi T."/>
            <person name="Oyama M."/>
            <person name="Hata H."/>
            <person name="Watanabe M."/>
            <person name="Komatsu T."/>
            <person name="Mizushima-Sugano J."/>
            <person name="Satoh T."/>
            <person name="Shirai Y."/>
            <person name="Takahashi Y."/>
            <person name="Nakagawa K."/>
            <person name="Okumura K."/>
            <person name="Nagase T."/>
            <person name="Nomura N."/>
            <person name="Kikuchi H."/>
            <person name="Masuho Y."/>
            <person name="Yamashita R."/>
            <person name="Nakai K."/>
            <person name="Yada T."/>
            <person name="Nakamura Y."/>
            <person name="Ohara O."/>
            <person name="Isogai T."/>
            <person name="Sugano S."/>
        </authorList>
    </citation>
    <scope>NUCLEOTIDE SEQUENCE [LARGE SCALE MRNA] (ISOFORM 1)</scope>
</reference>
<reference key="3">
    <citation type="journal article" date="2006" name="Nature">
        <title>The DNA sequence and biological annotation of human chromosome 1.</title>
        <authorList>
            <person name="Gregory S.G."/>
            <person name="Barlow K.F."/>
            <person name="McLay K.E."/>
            <person name="Kaul R."/>
            <person name="Swarbreck D."/>
            <person name="Dunham A."/>
            <person name="Scott C.E."/>
            <person name="Howe K.L."/>
            <person name="Woodfine K."/>
            <person name="Spencer C.C.A."/>
            <person name="Jones M.C."/>
            <person name="Gillson C."/>
            <person name="Searle S."/>
            <person name="Zhou Y."/>
            <person name="Kokocinski F."/>
            <person name="McDonald L."/>
            <person name="Evans R."/>
            <person name="Phillips K."/>
            <person name="Atkinson A."/>
            <person name="Cooper R."/>
            <person name="Jones C."/>
            <person name="Hall R.E."/>
            <person name="Andrews T.D."/>
            <person name="Lloyd C."/>
            <person name="Ainscough R."/>
            <person name="Almeida J.P."/>
            <person name="Ambrose K.D."/>
            <person name="Anderson F."/>
            <person name="Andrew R.W."/>
            <person name="Ashwell R.I.S."/>
            <person name="Aubin K."/>
            <person name="Babbage A.K."/>
            <person name="Bagguley C.L."/>
            <person name="Bailey J."/>
            <person name="Beasley H."/>
            <person name="Bethel G."/>
            <person name="Bird C.P."/>
            <person name="Bray-Allen S."/>
            <person name="Brown J.Y."/>
            <person name="Brown A.J."/>
            <person name="Buckley D."/>
            <person name="Burton J."/>
            <person name="Bye J."/>
            <person name="Carder C."/>
            <person name="Chapman J.C."/>
            <person name="Clark S.Y."/>
            <person name="Clarke G."/>
            <person name="Clee C."/>
            <person name="Cobley V."/>
            <person name="Collier R.E."/>
            <person name="Corby N."/>
            <person name="Coville G.J."/>
            <person name="Davies J."/>
            <person name="Deadman R."/>
            <person name="Dunn M."/>
            <person name="Earthrowl M."/>
            <person name="Ellington A.G."/>
            <person name="Errington H."/>
            <person name="Frankish A."/>
            <person name="Frankland J."/>
            <person name="French L."/>
            <person name="Garner P."/>
            <person name="Garnett J."/>
            <person name="Gay L."/>
            <person name="Ghori M.R.J."/>
            <person name="Gibson R."/>
            <person name="Gilby L.M."/>
            <person name="Gillett W."/>
            <person name="Glithero R.J."/>
            <person name="Grafham D.V."/>
            <person name="Griffiths C."/>
            <person name="Griffiths-Jones S."/>
            <person name="Grocock R."/>
            <person name="Hammond S."/>
            <person name="Harrison E.S.I."/>
            <person name="Hart E."/>
            <person name="Haugen E."/>
            <person name="Heath P.D."/>
            <person name="Holmes S."/>
            <person name="Holt K."/>
            <person name="Howden P.J."/>
            <person name="Hunt A.R."/>
            <person name="Hunt S.E."/>
            <person name="Hunter G."/>
            <person name="Isherwood J."/>
            <person name="James R."/>
            <person name="Johnson C."/>
            <person name="Johnson D."/>
            <person name="Joy A."/>
            <person name="Kay M."/>
            <person name="Kershaw J.K."/>
            <person name="Kibukawa M."/>
            <person name="Kimberley A.M."/>
            <person name="King A."/>
            <person name="Knights A.J."/>
            <person name="Lad H."/>
            <person name="Laird G."/>
            <person name="Lawlor S."/>
            <person name="Leongamornlert D.A."/>
            <person name="Lloyd D.M."/>
            <person name="Loveland J."/>
            <person name="Lovell J."/>
            <person name="Lush M.J."/>
            <person name="Lyne R."/>
            <person name="Martin S."/>
            <person name="Mashreghi-Mohammadi M."/>
            <person name="Matthews L."/>
            <person name="Matthews N.S.W."/>
            <person name="McLaren S."/>
            <person name="Milne S."/>
            <person name="Mistry S."/>
            <person name="Moore M.J.F."/>
            <person name="Nickerson T."/>
            <person name="O'Dell C.N."/>
            <person name="Oliver K."/>
            <person name="Palmeiri A."/>
            <person name="Palmer S.A."/>
            <person name="Parker A."/>
            <person name="Patel D."/>
            <person name="Pearce A.V."/>
            <person name="Peck A.I."/>
            <person name="Pelan S."/>
            <person name="Phelps K."/>
            <person name="Phillimore B.J."/>
            <person name="Plumb R."/>
            <person name="Rajan J."/>
            <person name="Raymond C."/>
            <person name="Rouse G."/>
            <person name="Saenphimmachak C."/>
            <person name="Sehra H.K."/>
            <person name="Sheridan E."/>
            <person name="Shownkeen R."/>
            <person name="Sims S."/>
            <person name="Skuce C.D."/>
            <person name="Smith M."/>
            <person name="Steward C."/>
            <person name="Subramanian S."/>
            <person name="Sycamore N."/>
            <person name="Tracey A."/>
            <person name="Tromans A."/>
            <person name="Van Helmond Z."/>
            <person name="Wall M."/>
            <person name="Wallis J.M."/>
            <person name="White S."/>
            <person name="Whitehead S.L."/>
            <person name="Wilkinson J.E."/>
            <person name="Willey D.L."/>
            <person name="Williams H."/>
            <person name="Wilming L."/>
            <person name="Wray P.W."/>
            <person name="Wu Z."/>
            <person name="Coulson A."/>
            <person name="Vaudin M."/>
            <person name="Sulston J.E."/>
            <person name="Durbin R.M."/>
            <person name="Hubbard T."/>
            <person name="Wooster R."/>
            <person name="Dunham I."/>
            <person name="Carter N.P."/>
            <person name="McVean G."/>
            <person name="Ross M.T."/>
            <person name="Harrow J."/>
            <person name="Olson M.V."/>
            <person name="Beck S."/>
            <person name="Rogers J."/>
            <person name="Bentley D.R."/>
        </authorList>
    </citation>
    <scope>NUCLEOTIDE SEQUENCE [LARGE SCALE GENOMIC DNA]</scope>
</reference>
<reference key="4">
    <citation type="submission" date="2005-09" db="EMBL/GenBank/DDBJ databases">
        <authorList>
            <person name="Mural R.J."/>
            <person name="Istrail S."/>
            <person name="Sutton G.G."/>
            <person name="Florea L."/>
            <person name="Halpern A.L."/>
            <person name="Mobarry C.M."/>
            <person name="Lippert R."/>
            <person name="Walenz B."/>
            <person name="Shatkay H."/>
            <person name="Dew I."/>
            <person name="Miller J.R."/>
            <person name="Flanigan M.J."/>
            <person name="Edwards N.J."/>
            <person name="Bolanos R."/>
            <person name="Fasulo D."/>
            <person name="Halldorsson B.V."/>
            <person name="Hannenhalli S."/>
            <person name="Turner R."/>
            <person name="Yooseph S."/>
            <person name="Lu F."/>
            <person name="Nusskern D.R."/>
            <person name="Shue B.C."/>
            <person name="Zheng X.H."/>
            <person name="Zhong F."/>
            <person name="Delcher A.L."/>
            <person name="Huson D.H."/>
            <person name="Kravitz S.A."/>
            <person name="Mouchard L."/>
            <person name="Reinert K."/>
            <person name="Remington K.A."/>
            <person name="Clark A.G."/>
            <person name="Waterman M.S."/>
            <person name="Eichler E.E."/>
            <person name="Adams M.D."/>
            <person name="Hunkapiller M.W."/>
            <person name="Myers E.W."/>
            <person name="Venter J.C."/>
        </authorList>
    </citation>
    <scope>NUCLEOTIDE SEQUENCE [LARGE SCALE GENOMIC DNA]</scope>
</reference>
<reference key="5">
    <citation type="journal article" date="2004" name="Genome Res.">
        <title>The status, quality, and expansion of the NIH full-length cDNA project: the Mammalian Gene Collection (MGC).</title>
        <authorList>
            <consortium name="The MGC Project Team"/>
        </authorList>
    </citation>
    <scope>NUCLEOTIDE SEQUENCE [LARGE SCALE MRNA] (ISOFORM 1)</scope>
    <source>
        <tissue>Brain</tissue>
    </source>
</reference>
<reference key="6">
    <citation type="journal article" date="2008" name="Proc. Natl. Acad. Sci. U.S.A.">
        <title>A quantitative atlas of mitotic phosphorylation.</title>
        <authorList>
            <person name="Dephoure N."/>
            <person name="Zhou C."/>
            <person name="Villen J."/>
            <person name="Beausoleil S.A."/>
            <person name="Bakalarski C.E."/>
            <person name="Elledge S.J."/>
            <person name="Gygi S.P."/>
        </authorList>
    </citation>
    <scope>PHOSPHORYLATION [LARGE SCALE ANALYSIS] AT SER-332 AND SER-631</scope>
    <scope>IDENTIFICATION BY MASS SPECTROMETRY [LARGE SCALE ANALYSIS]</scope>
    <source>
        <tissue>Cervix carcinoma</tissue>
    </source>
</reference>
<reference key="7">
    <citation type="journal article" date="2009" name="Mol. Cell. Proteomics">
        <title>Large-scale proteomics analysis of the human kinome.</title>
        <authorList>
            <person name="Oppermann F.S."/>
            <person name="Gnad F."/>
            <person name="Olsen J.V."/>
            <person name="Hornberger R."/>
            <person name="Greff Z."/>
            <person name="Keri G."/>
            <person name="Mann M."/>
            <person name="Daub H."/>
        </authorList>
    </citation>
    <scope>IDENTIFICATION BY MASS SPECTROMETRY [LARGE SCALE ANALYSIS]</scope>
</reference>
<reference key="8">
    <citation type="journal article" date="2009" name="Sci. Signal.">
        <title>Quantitative phosphoproteomic analysis of T cell receptor signaling reveals system-wide modulation of protein-protein interactions.</title>
        <authorList>
            <person name="Mayya V."/>
            <person name="Lundgren D.H."/>
            <person name="Hwang S.-I."/>
            <person name="Rezaul K."/>
            <person name="Wu L."/>
            <person name="Eng J.K."/>
            <person name="Rodionov V."/>
            <person name="Han D.K."/>
        </authorList>
    </citation>
    <scope>PHOSPHORYLATION [LARGE SCALE ANALYSIS] AT SER-332 AND SER-634</scope>
    <scope>IDENTIFICATION BY MASS SPECTROMETRY [LARGE SCALE ANALYSIS]</scope>
    <source>
        <tissue>Leukemic T-cell</tissue>
    </source>
</reference>
<reference key="9">
    <citation type="journal article" date="2010" name="Sci. Signal.">
        <title>Quantitative phosphoproteomics reveals widespread full phosphorylation site occupancy during mitosis.</title>
        <authorList>
            <person name="Olsen J.V."/>
            <person name="Vermeulen M."/>
            <person name="Santamaria A."/>
            <person name="Kumar C."/>
            <person name="Miller M.L."/>
            <person name="Jensen L.J."/>
            <person name="Gnad F."/>
            <person name="Cox J."/>
            <person name="Jensen T.S."/>
            <person name="Nigg E.A."/>
            <person name="Brunak S."/>
            <person name="Mann M."/>
        </authorList>
    </citation>
    <scope>PHOSPHORYLATION [LARGE SCALE ANALYSIS] AT SER-332</scope>
    <scope>IDENTIFICATION BY MASS SPECTROMETRY [LARGE SCALE ANALYSIS]</scope>
    <source>
        <tissue>Cervix carcinoma</tissue>
    </source>
</reference>
<reference key="10">
    <citation type="journal article" date="2011" name="PLoS Genet.">
        <title>Novel and conserved protein macoilin is required for diverse neuronal functions in Caenorhabditis elegans.</title>
        <authorList>
            <person name="Miyara A."/>
            <person name="Ohta A."/>
            <person name="Okochi Y."/>
            <person name="Tsukada Y."/>
            <person name="Kuhara A."/>
            <person name="Mori I."/>
        </authorList>
    </citation>
    <scope>SUBCELLULAR LOCATION</scope>
    <scope>FUNCTION</scope>
</reference>
<reference key="11">
    <citation type="journal article" date="2013" name="J. Proteome Res.">
        <title>Toward a comprehensive characterization of a human cancer cell phosphoproteome.</title>
        <authorList>
            <person name="Zhou H."/>
            <person name="Di Palma S."/>
            <person name="Preisinger C."/>
            <person name="Peng M."/>
            <person name="Polat A.N."/>
            <person name="Heck A.J."/>
            <person name="Mohammed S."/>
        </authorList>
    </citation>
    <scope>PHOSPHORYLATION [LARGE SCALE ANALYSIS] AT SER-305</scope>
    <scope>IDENTIFICATION BY MASS SPECTROMETRY [LARGE SCALE ANALYSIS]</scope>
    <source>
        <tissue>Cervix carcinoma</tissue>
        <tissue>Erythroleukemia</tissue>
    </source>
</reference>
<reference key="12">
    <citation type="journal article" date="2014" name="J. Proteomics">
        <title>An enzyme assisted RP-RPLC approach for in-depth analysis of human liver phosphoproteome.</title>
        <authorList>
            <person name="Bian Y."/>
            <person name="Song C."/>
            <person name="Cheng K."/>
            <person name="Dong M."/>
            <person name="Wang F."/>
            <person name="Huang J."/>
            <person name="Sun D."/>
            <person name="Wang L."/>
            <person name="Ye M."/>
            <person name="Zou H."/>
        </authorList>
    </citation>
    <scope>IDENTIFICATION BY MASS SPECTROMETRY [LARGE SCALE ANALYSIS]</scope>
    <source>
        <tissue>Liver</tissue>
    </source>
</reference>